<reference key="1">
    <citation type="submission" date="2004-06" db="EMBL/GenBank/DDBJ databases">
        <authorList>
            <consortium name="NIH - Xenopus Gene Collection (XGC) project"/>
        </authorList>
    </citation>
    <scope>NUCLEOTIDE SEQUENCE [LARGE SCALE MRNA]</scope>
    <source>
        <tissue>Eye</tissue>
    </source>
</reference>
<organism>
    <name type="scientific">Xenopus laevis</name>
    <name type="common">African clawed frog</name>
    <dbReference type="NCBI Taxonomy" id="8355"/>
    <lineage>
        <taxon>Eukaryota</taxon>
        <taxon>Metazoa</taxon>
        <taxon>Chordata</taxon>
        <taxon>Craniata</taxon>
        <taxon>Vertebrata</taxon>
        <taxon>Euteleostomi</taxon>
        <taxon>Amphibia</taxon>
        <taxon>Batrachia</taxon>
        <taxon>Anura</taxon>
        <taxon>Pipoidea</taxon>
        <taxon>Pipidae</taxon>
        <taxon>Xenopodinae</taxon>
        <taxon>Xenopus</taxon>
        <taxon>Xenopus</taxon>
    </lineage>
</organism>
<sequence>MLDPSSSEEEAEEVVEEPEIKEGQAPTTGTRLSPSRTSESSGGLQPSSRSSSVRPSSPSPSVVSEKEKEELEKLQKEEEERKRKLQLYVFVMRCIAYPFNAKQPTDMARRQQKISKQQLQTVKDRFQAFFNGETQIVADEAFMNAVQSYYEVFLKSDRVARMVQSGGCSANDSREVFKKHIEKRVRSLPEIDGLSKETVLSSWIAKFDAIYRGEEDPRKQQARMTASAASELILSKEQLYEMFQQILGIKKFEHQLLYNACQLDNLDEQAAQIRRELDGRLQMADQIARERKFPKFVSKEMENMYIEELKSSVNLLMANLESMPVSKGGSEFKLQKLKRSHNTSIIDMGEENENQLSKSDVVLSFSLEVVIMEVQGLKSLAPNRIVYCTMEVEGGQKLQTDQAEASKPMWGTQGDFSTTHALPAVKVKLFTESTGVLALEDKELGRVVLHPTPNSPKQSEWHKMTVSKNCPDHDLKIKLAVRMDKPQNMKHCGYLWVIGKNVWKRWKKRFFVLVQVSQYTFAMCSYREKKAEPQELLQLDGYTVDYTDPQPGLEGGRSFFNAVKEGDTVIFASDDEQDRILWVQAMYRATGQSHKPVPPTQVQKLNAKGGNIPQLDAPISQFYADRAQKHGMDEFISSNPCNFDHATLFEMVQRLTLDHRLNDSYSCLGWFSPGQVFVLDEYCARYGVRGCHRHLCYLGDLLERAENGSMVDPTLLHYSFAFCASHVHGNRPDGIGTVTVEEKERFEEIKERLRLLLENQITHFRYCFPFGRPEGALKATLSLLERVLMKDIVTPVPQEDVKNVIRKCLEQAALVNYTRLSEYAKIEENQKDAENVGRLITPAKKLEDTIRLAELVIEVLQQNEEHHAEAFAWWSDLMVEHAETFLSLFAVDMDAALEVQPPDSWESFPLFQLINDFLRSDYNLCNGKFHKHLQDLFAPLVVRYVDLMESSIAQSIHRGFERESWEPVKSLTSNLPNVNLPNVNLPKVPVTLPVNLPQMPSFSAPSWMAAIYDSDNGSATSEDLFWKLDALQTFIRDLHWPEEEFGKHLEQRLKLMASDMIESCVKRTRIAFEVKLQKTSRSTDFRVPQSICTMFNVMVDAKAQSTKLCSMEMGQEHQYHSKIDELIEETVKEMITLLVAKFVTILEGVLSKLSRYDEGTLFSSFLSFTKPGMDLADAYVTFIRHSQDVLRDKVNEEIYIERLFDQWYTSSMNVVCTWLTDRMDLQLHIYQLKTLIRIVKKTYRDFRLQGVLDSTLNSKTYDTVRNRLTVEEATASVSEGGGLQGITMKDSDEEDEEDD</sequence>
<protein>
    <recommendedName>
        <fullName>Calcium-dependent secretion activator 1</fullName>
    </recommendedName>
    <alternativeName>
        <fullName>Calcium-dependent activator protein for secretion 1</fullName>
        <shortName>CAPS-1</shortName>
    </alternativeName>
</protein>
<comment type="function">
    <text evidence="1">Calcium-binding protein involved in exocytosis of vesicles filled with neurotransmitters and neuropeptides. Probably acts upstream of fusion in the biogenesis or maintenance of mature secretory vesicles. Regulates catecholamine loading of DCVs. May specifically mediate the Ca(2+)-dependent exocytosis of large dense-core vesicles (DCVs) (By similarity).</text>
</comment>
<comment type="subunit">
    <text evidence="1">Homodimer.</text>
</comment>
<comment type="subcellular location">
    <subcellularLocation>
        <location evidence="2">Synapse</location>
    </subcellularLocation>
    <subcellularLocation>
        <location evidence="2">Cytoplasmic vesicle</location>
        <location evidence="2">Secretory vesicle</location>
        <location evidence="2">Neuronal dense core vesicle membrane</location>
        <topology evidence="2">Peripheral membrane protein</topology>
    </subcellularLocation>
    <text evidence="2">Membrane-associated to vesicles. Strongly enriched in synaptic fractions. Preferentially binds to DCVs but not to SVs. Binds phosphoinosides.</text>
</comment>
<comment type="domain">
    <text evidence="1">The PH domain is essential for regulated exocytosis and binds phospholipids.</text>
</comment>
<keyword id="KW-0106">Calcium</keyword>
<keyword id="KW-0968">Cytoplasmic vesicle</keyword>
<keyword id="KW-0268">Exocytosis</keyword>
<keyword id="KW-0446">Lipid-binding</keyword>
<keyword id="KW-0472">Membrane</keyword>
<keyword id="KW-0479">Metal-binding</keyword>
<keyword id="KW-0653">Protein transport</keyword>
<keyword id="KW-1185">Reference proteome</keyword>
<keyword id="KW-0770">Synapse</keyword>
<keyword id="KW-0813">Transport</keyword>
<gene>
    <name type="primary">cadps</name>
    <name type="synonym">caps</name>
    <name type="synonym">caps1</name>
</gene>
<name>CAPS1_XENLA</name>
<dbReference type="EMBL" id="BC074390">
    <property type="protein sequence ID" value="AAH74390.1"/>
    <property type="molecule type" value="mRNA"/>
</dbReference>
<dbReference type="RefSeq" id="NP_001086256.1">
    <property type="nucleotide sequence ID" value="NM_001092787.1"/>
</dbReference>
<dbReference type="SMR" id="Q6GLR7"/>
<dbReference type="GeneID" id="444685"/>
<dbReference type="KEGG" id="xla:444685"/>
<dbReference type="AGR" id="Xenbase:XB-GENE-5755962"/>
<dbReference type="CTD" id="444685"/>
<dbReference type="Xenbase" id="XB-GENE-5755962">
    <property type="gene designation" value="cadps.L"/>
</dbReference>
<dbReference type="OrthoDB" id="10063282at2759"/>
<dbReference type="Proteomes" id="UP000186698">
    <property type="component" value="Chromosome 4L"/>
</dbReference>
<dbReference type="Bgee" id="444685">
    <property type="expression patterns" value="Expressed in brain and 6 other cell types or tissues"/>
</dbReference>
<dbReference type="GO" id="GO:0098978">
    <property type="term" value="C:glutamatergic synapse"/>
    <property type="evidence" value="ECO:0000318"/>
    <property type="project" value="GO_Central"/>
</dbReference>
<dbReference type="GO" id="GO:0099012">
    <property type="term" value="C:neuronal dense core vesicle membrane"/>
    <property type="evidence" value="ECO:0007669"/>
    <property type="project" value="UniProtKB-SubCell"/>
</dbReference>
<dbReference type="GO" id="GO:0098793">
    <property type="term" value="C:presynapse"/>
    <property type="evidence" value="ECO:0007669"/>
    <property type="project" value="GOC"/>
</dbReference>
<dbReference type="GO" id="GO:0008289">
    <property type="term" value="F:lipid binding"/>
    <property type="evidence" value="ECO:0007669"/>
    <property type="project" value="UniProtKB-KW"/>
</dbReference>
<dbReference type="GO" id="GO:0046872">
    <property type="term" value="F:metal ion binding"/>
    <property type="evidence" value="ECO:0007669"/>
    <property type="project" value="UniProtKB-KW"/>
</dbReference>
<dbReference type="GO" id="GO:1990504">
    <property type="term" value="P:dense core granule exocytosis"/>
    <property type="evidence" value="ECO:0007669"/>
    <property type="project" value="InterPro"/>
</dbReference>
<dbReference type="GO" id="GO:0006887">
    <property type="term" value="P:exocytosis"/>
    <property type="evidence" value="ECO:0000318"/>
    <property type="project" value="GO_Central"/>
</dbReference>
<dbReference type="GO" id="GO:0045921">
    <property type="term" value="P:positive regulation of exocytosis"/>
    <property type="evidence" value="ECO:0000318"/>
    <property type="project" value="GO_Central"/>
</dbReference>
<dbReference type="GO" id="GO:0015031">
    <property type="term" value="P:protein transport"/>
    <property type="evidence" value="ECO:0007669"/>
    <property type="project" value="UniProtKB-KW"/>
</dbReference>
<dbReference type="GO" id="GO:0016079">
    <property type="term" value="P:synaptic vesicle exocytosis"/>
    <property type="evidence" value="ECO:0007669"/>
    <property type="project" value="InterPro"/>
</dbReference>
<dbReference type="CDD" id="cd01234">
    <property type="entry name" value="PH_CADPS"/>
    <property type="match status" value="1"/>
</dbReference>
<dbReference type="FunFam" id="2.30.29.30:FF:000007">
    <property type="entry name" value="Calcium-dependent secretion activator 2 isoform B"/>
    <property type="match status" value="1"/>
</dbReference>
<dbReference type="Gene3D" id="2.30.29.30">
    <property type="entry name" value="Pleckstrin-homology domain (PH domain)/Phosphotyrosine-binding domain (PTB)"/>
    <property type="match status" value="1"/>
</dbReference>
<dbReference type="InterPro" id="IPR000008">
    <property type="entry name" value="C2_dom"/>
</dbReference>
<dbReference type="InterPro" id="IPR033227">
    <property type="entry name" value="CAPS"/>
</dbReference>
<dbReference type="InterPro" id="IPR010439">
    <property type="entry name" value="MUN_dom"/>
</dbReference>
<dbReference type="InterPro" id="IPR014770">
    <property type="entry name" value="Munc13_1"/>
</dbReference>
<dbReference type="InterPro" id="IPR011993">
    <property type="entry name" value="PH-like_dom_sf"/>
</dbReference>
<dbReference type="InterPro" id="IPR001849">
    <property type="entry name" value="PH_domain"/>
</dbReference>
<dbReference type="PANTHER" id="PTHR12166">
    <property type="entry name" value="CALCIUM-DEPENDENT SECRETION ACTIVATOR"/>
    <property type="match status" value="1"/>
</dbReference>
<dbReference type="PANTHER" id="PTHR12166:SF6">
    <property type="entry name" value="CALCIUM-DEPENDENT SECRETION ACTIVATOR 1"/>
    <property type="match status" value="1"/>
</dbReference>
<dbReference type="Pfam" id="PF25341">
    <property type="entry name" value="C2_CAPS"/>
    <property type="match status" value="1"/>
</dbReference>
<dbReference type="Pfam" id="PF06292">
    <property type="entry name" value="MUN"/>
    <property type="match status" value="2"/>
</dbReference>
<dbReference type="Pfam" id="PF00169">
    <property type="entry name" value="PH"/>
    <property type="match status" value="1"/>
</dbReference>
<dbReference type="SMART" id="SM01145">
    <property type="entry name" value="DUF1041"/>
    <property type="match status" value="1"/>
</dbReference>
<dbReference type="SMART" id="SM00233">
    <property type="entry name" value="PH"/>
    <property type="match status" value="1"/>
</dbReference>
<dbReference type="SUPFAM" id="SSF50729">
    <property type="entry name" value="PH domain-like"/>
    <property type="match status" value="1"/>
</dbReference>
<dbReference type="PROSITE" id="PS50004">
    <property type="entry name" value="C2"/>
    <property type="match status" value="1"/>
</dbReference>
<dbReference type="PROSITE" id="PS51258">
    <property type="entry name" value="MHD1"/>
    <property type="match status" value="1"/>
</dbReference>
<dbReference type="PROSITE" id="PS50003">
    <property type="entry name" value="PH_DOMAIN"/>
    <property type="match status" value="1"/>
</dbReference>
<feature type="chain" id="PRO_0000053867" description="Calcium-dependent secretion activator 1">
    <location>
        <begin position="1"/>
        <end position="1299"/>
    </location>
</feature>
<feature type="domain" description="C2" evidence="3">
    <location>
        <begin position="347"/>
        <end position="462"/>
    </location>
</feature>
<feature type="domain" description="PH" evidence="4">
    <location>
        <begin position="488"/>
        <end position="591"/>
    </location>
</feature>
<feature type="domain" description="MHD1" evidence="5">
    <location>
        <begin position="891"/>
        <end position="1068"/>
    </location>
</feature>
<feature type="region of interest" description="Disordered" evidence="6">
    <location>
        <begin position="1"/>
        <end position="77"/>
    </location>
</feature>
<feature type="region of interest" description="Disordered" evidence="6">
    <location>
        <begin position="1277"/>
        <end position="1299"/>
    </location>
</feature>
<feature type="compositionally biased region" description="Acidic residues" evidence="6">
    <location>
        <begin position="1"/>
        <end position="19"/>
    </location>
</feature>
<feature type="compositionally biased region" description="Polar residues" evidence="6">
    <location>
        <begin position="25"/>
        <end position="37"/>
    </location>
</feature>
<feature type="compositionally biased region" description="Low complexity" evidence="6">
    <location>
        <begin position="38"/>
        <end position="63"/>
    </location>
</feature>
<feature type="compositionally biased region" description="Basic and acidic residues" evidence="6">
    <location>
        <begin position="64"/>
        <end position="77"/>
    </location>
</feature>
<accession>Q6GLR7</accession>
<proteinExistence type="evidence at transcript level"/>
<evidence type="ECO:0000250" key="1"/>
<evidence type="ECO:0000250" key="2">
    <source>
        <dbReference type="UniProtKB" id="Q62717"/>
    </source>
</evidence>
<evidence type="ECO:0000255" key="3">
    <source>
        <dbReference type="PROSITE-ProRule" id="PRU00041"/>
    </source>
</evidence>
<evidence type="ECO:0000255" key="4">
    <source>
        <dbReference type="PROSITE-ProRule" id="PRU00145"/>
    </source>
</evidence>
<evidence type="ECO:0000255" key="5">
    <source>
        <dbReference type="PROSITE-ProRule" id="PRU00587"/>
    </source>
</evidence>
<evidence type="ECO:0000256" key="6">
    <source>
        <dbReference type="SAM" id="MobiDB-lite"/>
    </source>
</evidence>